<organism>
    <name type="scientific">Mus musculus</name>
    <name type="common">Mouse</name>
    <dbReference type="NCBI Taxonomy" id="10090"/>
    <lineage>
        <taxon>Eukaryota</taxon>
        <taxon>Metazoa</taxon>
        <taxon>Chordata</taxon>
        <taxon>Craniata</taxon>
        <taxon>Vertebrata</taxon>
        <taxon>Euteleostomi</taxon>
        <taxon>Mammalia</taxon>
        <taxon>Eutheria</taxon>
        <taxon>Euarchontoglires</taxon>
        <taxon>Glires</taxon>
        <taxon>Rodentia</taxon>
        <taxon>Myomorpha</taxon>
        <taxon>Muroidea</taxon>
        <taxon>Muridae</taxon>
        <taxon>Murinae</taxon>
        <taxon>Mus</taxon>
        <taxon>Mus</taxon>
    </lineage>
</organism>
<evidence type="ECO:0000303" key="1">
    <source>
    </source>
</evidence>
<evidence type="ECO:0000305" key="2"/>
<comment type="alternative products">
    <event type="alternative splicing"/>
    <isoform>
        <id>Q3UJC8-1</id>
        <name>1</name>
        <sequence type="displayed"/>
    </isoform>
    <isoform>
        <id>Q3UJC8-2</id>
        <name>2</name>
        <sequence type="described" ref="VSP_027120 VSP_027121"/>
    </isoform>
</comment>
<comment type="sequence caution" evidence="2">
    <conflict type="frameshift">
        <sequence resource="EMBL-CDS" id="BAB25748"/>
    </conflict>
</comment>
<comment type="sequence caution" evidence="2">
    <conflict type="frameshift">
        <sequence resource="EMBL-CDS" id="BAE36055"/>
    </conflict>
</comment>
<protein>
    <recommendedName>
        <fullName>Uncharacterized protein C5orf34 homolog</fullName>
    </recommendedName>
</protein>
<keyword id="KW-0025">Alternative splicing</keyword>
<keyword id="KW-1185">Reference proteome</keyword>
<feature type="chain" id="PRO_0000295898" description="Uncharacterized protein C5orf34 homolog">
    <location>
        <begin position="1"/>
        <end position="639"/>
    </location>
</feature>
<feature type="splice variant" id="VSP_027120" description="In isoform 2." evidence="1">
    <original>RE</original>
    <variation>VS</variation>
    <location>
        <begin position="389"/>
        <end position="390"/>
    </location>
</feature>
<feature type="splice variant" id="VSP_027121" description="In isoform 2." evidence="1">
    <location>
        <begin position="391"/>
        <end position="639"/>
    </location>
</feature>
<feature type="sequence conflict" description="In Ref. 2; AAH21327." evidence="2" ref="2">
    <original>V</original>
    <variation>A</variation>
    <location>
        <position position="10"/>
    </location>
</feature>
<feature type="sequence conflict" description="In Ref. 1; BAB25748." evidence="2" ref="1">
    <original>S</original>
    <variation>F</variation>
    <location>
        <position position="34"/>
    </location>
</feature>
<feature type="sequence conflict" description="In Ref. 2; AAH21327." evidence="2" ref="2">
    <original>M</original>
    <variation>T</variation>
    <location>
        <position position="118"/>
    </location>
</feature>
<feature type="sequence conflict" description="In Ref. 2; AAH21327." evidence="2" ref="2">
    <original>E</original>
    <variation>G</variation>
    <location>
        <position position="190"/>
    </location>
</feature>
<feature type="sequence conflict" description="In Ref. 2; AAH21327." evidence="2" ref="2">
    <original>S</original>
    <variation>T</variation>
    <location>
        <position position="220"/>
    </location>
</feature>
<feature type="sequence conflict" description="In Ref. 2; AAH21327." evidence="2" ref="2">
    <original>G</original>
    <variation>S</variation>
    <location>
        <position position="230"/>
    </location>
</feature>
<feature type="sequence conflict" description="In Ref. 2; AAH21327." evidence="2" ref="2">
    <original>V</original>
    <variation>M</variation>
    <location>
        <position position="236"/>
    </location>
</feature>
<feature type="sequence conflict" description="In Ref. 2; AAH21327." evidence="2" ref="2">
    <original>A</original>
    <variation>S</variation>
    <location>
        <position position="248"/>
    </location>
</feature>
<feature type="sequence conflict" description="In Ref. 2; AAH21327." evidence="2" ref="2">
    <original>C</original>
    <variation>V</variation>
    <location>
        <position position="287"/>
    </location>
</feature>
<feature type="sequence conflict" description="In Ref. 2; AAH21327." evidence="2" ref="2">
    <original>T</original>
    <variation>M</variation>
    <location>
        <position position="293"/>
    </location>
</feature>
<feature type="sequence conflict" description="In Ref. 1; BAE28742." evidence="2" ref="1">
    <original>Q</original>
    <variation>R</variation>
    <location>
        <position position="322"/>
    </location>
</feature>
<feature type="sequence conflict" description="In Ref. 2; AAH21327." evidence="2" ref="2">
    <original>P</original>
    <variation>S</variation>
    <location>
        <position position="325"/>
    </location>
</feature>
<feature type="sequence conflict" description="In Ref. 2; AAH21327." evidence="2" ref="2">
    <original>Y</original>
    <variation>F</variation>
    <location>
        <position position="346"/>
    </location>
</feature>
<feature type="sequence conflict" description="In Ref. 2; AAH21327." evidence="2" ref="2">
    <original>Y</original>
    <variation>C</variation>
    <location>
        <position position="529"/>
    </location>
</feature>
<feature type="sequence conflict" description="In Ref. 2; AAH21327." evidence="2" ref="2">
    <original>Q</original>
    <variation>R</variation>
    <location>
        <position position="550"/>
    </location>
</feature>
<accession>Q3UJC8</accession>
<accession>Q3TUB6</accession>
<accession>Q3UF19</accession>
<accession>Q78HE1</accession>
<accession>Q8K3D5</accession>
<accession>Q9CUS5</accession>
<accession>Q9D822</accession>
<dbReference type="EMBL" id="AK008565">
    <property type="protein sequence ID" value="BAB25748.1"/>
    <property type="status" value="ALT_FRAME"/>
    <property type="molecule type" value="mRNA"/>
</dbReference>
<dbReference type="EMBL" id="AK014735">
    <property type="protein sequence ID" value="BAB29525.3"/>
    <property type="molecule type" value="mRNA"/>
</dbReference>
<dbReference type="EMBL" id="AK146515">
    <property type="protein sequence ID" value="BAE27227.1"/>
    <property type="molecule type" value="mRNA"/>
</dbReference>
<dbReference type="EMBL" id="AK149119">
    <property type="protein sequence ID" value="BAE28742.1"/>
    <property type="molecule type" value="mRNA"/>
</dbReference>
<dbReference type="EMBL" id="AK160863">
    <property type="protein sequence ID" value="BAE36055.1"/>
    <property type="status" value="ALT_FRAME"/>
    <property type="molecule type" value="mRNA"/>
</dbReference>
<dbReference type="EMBL" id="BC021327">
    <property type="protein sequence ID" value="AAH21327.1"/>
    <property type="molecule type" value="mRNA"/>
</dbReference>
<dbReference type="EMBL" id="BC030738">
    <property type="protein sequence ID" value="AAH30738.1"/>
    <property type="molecule type" value="mRNA"/>
</dbReference>
<dbReference type="CCDS" id="CCDS49373.1">
    <molecule id="Q3UJC8-1"/>
</dbReference>
<dbReference type="RefSeq" id="NP_001107022.1">
    <molecule id="Q3UJC8-1"/>
    <property type="nucleotide sequence ID" value="NM_001113550.1"/>
</dbReference>
<dbReference type="RefSeq" id="NP_001347734.1">
    <molecule id="Q3UJC8-1"/>
    <property type="nucleotide sequence ID" value="NM_001360805.1"/>
</dbReference>
<dbReference type="RefSeq" id="NP_080403.4">
    <molecule id="Q3UJC8-1"/>
    <property type="nucleotide sequence ID" value="NM_026127.4"/>
</dbReference>
<dbReference type="RefSeq" id="XP_006517806.1">
    <molecule id="Q3UJC8-1"/>
    <property type="nucleotide sequence ID" value="XM_006517743.2"/>
</dbReference>
<dbReference type="RefSeq" id="XP_006517807.1">
    <molecule id="Q3UJC8-1"/>
    <property type="nucleotide sequence ID" value="XM_006517744.2"/>
</dbReference>
<dbReference type="RefSeq" id="XP_006517808.1">
    <property type="nucleotide sequence ID" value="XM_006517745.1"/>
</dbReference>
<dbReference type="RefSeq" id="XP_006517809.1">
    <property type="nucleotide sequence ID" value="XM_006517746.1"/>
</dbReference>
<dbReference type="RefSeq" id="XP_006517810.1">
    <molecule id="Q3UJC8-1"/>
    <property type="nucleotide sequence ID" value="XM_006517747.2"/>
</dbReference>
<dbReference type="RefSeq" id="XP_006517811.1">
    <molecule id="Q3UJC8-1"/>
    <property type="nucleotide sequence ID" value="XM_006517748.2"/>
</dbReference>
<dbReference type="BioGRID" id="212156">
    <property type="interactions" value="1"/>
</dbReference>
<dbReference type="FunCoup" id="Q3UJC8">
    <property type="interactions" value="126"/>
</dbReference>
<dbReference type="STRING" id="10090.ENSMUSP00000153150"/>
<dbReference type="PhosphoSitePlus" id="Q3UJC8"/>
<dbReference type="PaxDb" id="10090-ENSMUSP00000026519"/>
<dbReference type="Antibodypedia" id="50296">
    <property type="antibodies" value="22 antibodies from 6 providers"/>
</dbReference>
<dbReference type="DNASU" id="67392"/>
<dbReference type="Ensembl" id="ENSMUST00000026519.10">
    <molecule id="Q3UJC8-1"/>
    <property type="protein sequence ID" value="ENSMUSP00000026519.9"/>
    <property type="gene ID" value="ENSMUSG00000062822.9"/>
</dbReference>
<dbReference type="Ensembl" id="ENSMUST00000224312.2">
    <molecule id="Q3UJC8-1"/>
    <property type="protein sequence ID" value="ENSMUSP00000153150.2"/>
    <property type="gene ID" value="ENSMUSG00000062822.9"/>
</dbReference>
<dbReference type="Ensembl" id="ENSMUST00000225186.2">
    <molecule id="Q3UJC8-1"/>
    <property type="protein sequence ID" value="ENSMUSP00000153079.2"/>
    <property type="gene ID" value="ENSMUSG00000062822.9"/>
</dbReference>
<dbReference type="Ensembl" id="ENSMUST00000225726.2">
    <molecule id="Q3UJC8-2"/>
    <property type="protein sequence ID" value="ENSMUSP00000153338.2"/>
    <property type="gene ID" value="ENSMUSG00000062822.9"/>
</dbReference>
<dbReference type="GeneID" id="67392"/>
<dbReference type="KEGG" id="mmu:67392"/>
<dbReference type="UCSC" id="uc007rzf.2">
    <molecule id="Q3UJC8-2"/>
    <property type="organism name" value="mouse"/>
</dbReference>
<dbReference type="UCSC" id="uc007rzh.2">
    <molecule id="Q3UJC8-1"/>
    <property type="organism name" value="mouse"/>
</dbReference>
<dbReference type="AGR" id="MGI:1914642"/>
<dbReference type="MGI" id="MGI:1914642">
    <property type="gene designation" value="4833420G17Rik"/>
</dbReference>
<dbReference type="VEuPathDB" id="HostDB:ENSMUSG00000062822"/>
<dbReference type="eggNOG" id="ENOG502QSYT">
    <property type="taxonomic scope" value="Eukaryota"/>
</dbReference>
<dbReference type="GeneTree" id="ENSGT00500000044987"/>
<dbReference type="HOGENOM" id="CLU_029198_0_0_1"/>
<dbReference type="InParanoid" id="Q3UJC8"/>
<dbReference type="OMA" id="TAVISWC"/>
<dbReference type="OrthoDB" id="75908at2759"/>
<dbReference type="PhylomeDB" id="Q3UJC8"/>
<dbReference type="TreeFam" id="TF328443"/>
<dbReference type="BioGRID-ORCS" id="67392">
    <property type="hits" value="3 hits in 78 CRISPR screens"/>
</dbReference>
<dbReference type="PRO" id="PR:Q3UJC8"/>
<dbReference type="Proteomes" id="UP000000589">
    <property type="component" value="Chromosome 13"/>
</dbReference>
<dbReference type="RNAct" id="Q3UJC8">
    <property type="molecule type" value="protein"/>
</dbReference>
<dbReference type="Bgee" id="ENSMUSG00000062822">
    <property type="expression patterns" value="Expressed in metanephric proximal tubule and 257 other cell types or tissues"/>
</dbReference>
<dbReference type="ExpressionAtlas" id="Q3UJC8">
    <property type="expression patterns" value="baseline and differential"/>
</dbReference>
<dbReference type="InterPro" id="IPR053901">
    <property type="entry name" value="C5orf34-like"/>
</dbReference>
<dbReference type="InterPro" id="IPR053899">
    <property type="entry name" value="C5orf34-like_2nd"/>
</dbReference>
<dbReference type="InterPro" id="IPR027865">
    <property type="entry name" value="C5orf34-like_C"/>
</dbReference>
<dbReference type="InterPro" id="IPR053900">
    <property type="entry name" value="C5orf34-like_dom"/>
</dbReference>
<dbReference type="InterPro" id="IPR027830">
    <property type="entry name" value="C5orf34-like_N"/>
</dbReference>
<dbReference type="PANTHER" id="PTHR34531:SF1">
    <property type="entry name" value="CHROMOSOME 5 OPEN READING FRAME 34"/>
    <property type="match status" value="1"/>
</dbReference>
<dbReference type="PANTHER" id="PTHR34531">
    <property type="entry name" value="ZGC:153352"/>
    <property type="match status" value="1"/>
</dbReference>
<dbReference type="Pfam" id="PF15025">
    <property type="entry name" value="C5orf34-like_N"/>
    <property type="match status" value="1"/>
</dbReference>
<dbReference type="Pfam" id="PF22833">
    <property type="entry name" value="C5orf34_2nd"/>
    <property type="match status" value="1"/>
</dbReference>
<dbReference type="Pfam" id="PF15016">
    <property type="entry name" value="C5orf34_C"/>
    <property type="match status" value="1"/>
</dbReference>
<dbReference type="Pfam" id="PF22834">
    <property type="entry name" value="Polo_box_4"/>
    <property type="match status" value="1"/>
</dbReference>
<sequence length="639" mass="72263">MGMAAEVRMVLYEDDSVQVHYACGSTLQLSPCGSEFLFEKALPPSTHPLEQPERIRQRTHFVISNYREQLQRALDFRNSSATCPFLSESIIPPERKKHIFIDFSEVEWPSLDRDDCIMYSESGVVKITSLDGHAYLCLPRSQHEFTVHFLCKVSQRPDSSGILSETQNQDPKNKLVEKTRKVCRCGNLSEQTLRNKENEPPYQILKSKNASVNTCCVNDSEGRGELPSLGTNHRCVYAWVKQAWSVAACPEAWKHPLSLALRFYNKVRAASEIDADFPASSIVTSDCPEERGTEVSVLPRALLLSCPAPHMHRWTFCDSLLQRQPDAEDFSYPELVKVVWYKGVTYRLTHKNVNSIEIFPGDGSVFKSEGAHFGNYFTYYPSQEESEKREEKTYSVNNLPPDRPGNFFSVRSLIKQATRILQHCAKIRLSLSHNYRVCCWKMAPGVSVSTILPVLLKESLIPGVGRFLAYSDDKVHAVFLDGVTVTLNWHLSSSAEKKQVDQGLSFGWCRLTFPDGQDQLIPTEHPGAYERYVTSVISWCRGLTQTSPRQVPTHLSPALKENWSVASELEKIQKFNWLLENSGVLNLTSSKNEQCSGHCKSGSSETLLEATNEERVSVALKRTSEILQDIDRLLSLSRK</sequence>
<reference key="1">
    <citation type="journal article" date="2005" name="Science">
        <title>The transcriptional landscape of the mammalian genome.</title>
        <authorList>
            <person name="Carninci P."/>
            <person name="Kasukawa T."/>
            <person name="Katayama S."/>
            <person name="Gough J."/>
            <person name="Frith M.C."/>
            <person name="Maeda N."/>
            <person name="Oyama R."/>
            <person name="Ravasi T."/>
            <person name="Lenhard B."/>
            <person name="Wells C."/>
            <person name="Kodzius R."/>
            <person name="Shimokawa K."/>
            <person name="Bajic V.B."/>
            <person name="Brenner S.E."/>
            <person name="Batalov S."/>
            <person name="Forrest A.R."/>
            <person name="Zavolan M."/>
            <person name="Davis M.J."/>
            <person name="Wilming L.G."/>
            <person name="Aidinis V."/>
            <person name="Allen J.E."/>
            <person name="Ambesi-Impiombato A."/>
            <person name="Apweiler R."/>
            <person name="Aturaliya R.N."/>
            <person name="Bailey T.L."/>
            <person name="Bansal M."/>
            <person name="Baxter L."/>
            <person name="Beisel K.W."/>
            <person name="Bersano T."/>
            <person name="Bono H."/>
            <person name="Chalk A.M."/>
            <person name="Chiu K.P."/>
            <person name="Choudhary V."/>
            <person name="Christoffels A."/>
            <person name="Clutterbuck D.R."/>
            <person name="Crowe M.L."/>
            <person name="Dalla E."/>
            <person name="Dalrymple B.P."/>
            <person name="de Bono B."/>
            <person name="Della Gatta G."/>
            <person name="di Bernardo D."/>
            <person name="Down T."/>
            <person name="Engstrom P."/>
            <person name="Fagiolini M."/>
            <person name="Faulkner G."/>
            <person name="Fletcher C.F."/>
            <person name="Fukushima T."/>
            <person name="Furuno M."/>
            <person name="Futaki S."/>
            <person name="Gariboldi M."/>
            <person name="Georgii-Hemming P."/>
            <person name="Gingeras T.R."/>
            <person name="Gojobori T."/>
            <person name="Green R.E."/>
            <person name="Gustincich S."/>
            <person name="Harbers M."/>
            <person name="Hayashi Y."/>
            <person name="Hensch T.K."/>
            <person name="Hirokawa N."/>
            <person name="Hill D."/>
            <person name="Huminiecki L."/>
            <person name="Iacono M."/>
            <person name="Ikeo K."/>
            <person name="Iwama A."/>
            <person name="Ishikawa T."/>
            <person name="Jakt M."/>
            <person name="Kanapin A."/>
            <person name="Katoh M."/>
            <person name="Kawasawa Y."/>
            <person name="Kelso J."/>
            <person name="Kitamura H."/>
            <person name="Kitano H."/>
            <person name="Kollias G."/>
            <person name="Krishnan S.P."/>
            <person name="Kruger A."/>
            <person name="Kummerfeld S.K."/>
            <person name="Kurochkin I.V."/>
            <person name="Lareau L.F."/>
            <person name="Lazarevic D."/>
            <person name="Lipovich L."/>
            <person name="Liu J."/>
            <person name="Liuni S."/>
            <person name="McWilliam S."/>
            <person name="Madan Babu M."/>
            <person name="Madera M."/>
            <person name="Marchionni L."/>
            <person name="Matsuda H."/>
            <person name="Matsuzawa S."/>
            <person name="Miki H."/>
            <person name="Mignone F."/>
            <person name="Miyake S."/>
            <person name="Morris K."/>
            <person name="Mottagui-Tabar S."/>
            <person name="Mulder N."/>
            <person name="Nakano N."/>
            <person name="Nakauchi H."/>
            <person name="Ng P."/>
            <person name="Nilsson R."/>
            <person name="Nishiguchi S."/>
            <person name="Nishikawa S."/>
            <person name="Nori F."/>
            <person name="Ohara O."/>
            <person name="Okazaki Y."/>
            <person name="Orlando V."/>
            <person name="Pang K.C."/>
            <person name="Pavan W.J."/>
            <person name="Pavesi G."/>
            <person name="Pesole G."/>
            <person name="Petrovsky N."/>
            <person name="Piazza S."/>
            <person name="Reed J."/>
            <person name="Reid J.F."/>
            <person name="Ring B.Z."/>
            <person name="Ringwald M."/>
            <person name="Rost B."/>
            <person name="Ruan Y."/>
            <person name="Salzberg S.L."/>
            <person name="Sandelin A."/>
            <person name="Schneider C."/>
            <person name="Schoenbach C."/>
            <person name="Sekiguchi K."/>
            <person name="Semple C.A."/>
            <person name="Seno S."/>
            <person name="Sessa L."/>
            <person name="Sheng Y."/>
            <person name="Shibata Y."/>
            <person name="Shimada H."/>
            <person name="Shimada K."/>
            <person name="Silva D."/>
            <person name="Sinclair B."/>
            <person name="Sperling S."/>
            <person name="Stupka E."/>
            <person name="Sugiura K."/>
            <person name="Sultana R."/>
            <person name="Takenaka Y."/>
            <person name="Taki K."/>
            <person name="Tammoja K."/>
            <person name="Tan S.L."/>
            <person name="Tang S."/>
            <person name="Taylor M.S."/>
            <person name="Tegner J."/>
            <person name="Teichmann S.A."/>
            <person name="Ueda H.R."/>
            <person name="van Nimwegen E."/>
            <person name="Verardo R."/>
            <person name="Wei C.L."/>
            <person name="Yagi K."/>
            <person name="Yamanishi H."/>
            <person name="Zabarovsky E."/>
            <person name="Zhu S."/>
            <person name="Zimmer A."/>
            <person name="Hide W."/>
            <person name="Bult C."/>
            <person name="Grimmond S.M."/>
            <person name="Teasdale R.D."/>
            <person name="Liu E.T."/>
            <person name="Brusic V."/>
            <person name="Quackenbush J."/>
            <person name="Wahlestedt C."/>
            <person name="Mattick J.S."/>
            <person name="Hume D.A."/>
            <person name="Kai C."/>
            <person name="Sasaki D."/>
            <person name="Tomaru Y."/>
            <person name="Fukuda S."/>
            <person name="Kanamori-Katayama M."/>
            <person name="Suzuki M."/>
            <person name="Aoki J."/>
            <person name="Arakawa T."/>
            <person name="Iida J."/>
            <person name="Imamura K."/>
            <person name="Itoh M."/>
            <person name="Kato T."/>
            <person name="Kawaji H."/>
            <person name="Kawagashira N."/>
            <person name="Kawashima T."/>
            <person name="Kojima M."/>
            <person name="Kondo S."/>
            <person name="Konno H."/>
            <person name="Nakano K."/>
            <person name="Ninomiya N."/>
            <person name="Nishio T."/>
            <person name="Okada M."/>
            <person name="Plessy C."/>
            <person name="Shibata K."/>
            <person name="Shiraki T."/>
            <person name="Suzuki S."/>
            <person name="Tagami M."/>
            <person name="Waki K."/>
            <person name="Watahiki A."/>
            <person name="Okamura-Oho Y."/>
            <person name="Suzuki H."/>
            <person name="Kawai J."/>
            <person name="Hayashizaki Y."/>
        </authorList>
    </citation>
    <scope>NUCLEOTIDE SEQUENCE [LARGE SCALE MRNA] (ISOFORMS 1 AND 2)</scope>
    <source>
        <strain>C57BL/6J</strain>
        <tissue>Brain</tissue>
        <tissue>Head</tissue>
        <tissue>Kidney</tissue>
        <tissue>Small intestine</tissue>
        <tissue>Sympathetic ganglion</tissue>
    </source>
</reference>
<reference key="2">
    <citation type="journal article" date="2004" name="Genome Res.">
        <title>The status, quality, and expansion of the NIH full-length cDNA project: the Mammalian Gene Collection (MGC).</title>
        <authorList>
            <consortium name="The MGC Project Team"/>
        </authorList>
    </citation>
    <scope>NUCLEOTIDE SEQUENCE [LARGE SCALE MRNA] (ISOFORM 1)</scope>
    <source>
        <strain>Czech II</strain>
        <tissue>Mammary gland</tissue>
        <tissue>Mammary tumor</tissue>
    </source>
</reference>
<name>CE034_MOUSE</name>
<proteinExistence type="evidence at transcript level"/>